<evidence type="ECO:0000250" key="1">
    <source>
        <dbReference type="UniProtKB" id="O22317"/>
    </source>
</evidence>
<evidence type="ECO:0000255" key="2"/>
<evidence type="ECO:0000256" key="3">
    <source>
        <dbReference type="SAM" id="MobiDB-lite"/>
    </source>
</evidence>
<evidence type="ECO:0000269" key="4">
    <source>
    </source>
</evidence>
<evidence type="ECO:0000269" key="5">
    <source>
    </source>
</evidence>
<evidence type="ECO:0000303" key="6">
    <source>
    </source>
</evidence>
<evidence type="ECO:0000305" key="7"/>
<feature type="signal peptide" evidence="2">
    <location>
        <begin position="1"/>
        <end position="26"/>
    </location>
</feature>
<feature type="chain" id="PRO_0000251267" description="Glucan endo-1,3-beta-glucosidase 10">
    <location>
        <begin position="27"/>
        <end position="401"/>
    </location>
</feature>
<feature type="propeptide" id="PRO_0000251268" description="Removed in mature form" evidence="2">
    <location>
        <begin position="402"/>
        <end position="425"/>
    </location>
</feature>
<feature type="region of interest" description="Disordered" evidence="3">
    <location>
        <begin position="347"/>
        <end position="387"/>
    </location>
</feature>
<feature type="compositionally biased region" description="Low complexity" evidence="3">
    <location>
        <begin position="350"/>
        <end position="366"/>
    </location>
</feature>
<feature type="compositionally biased region" description="Gly residues" evidence="3">
    <location>
        <begin position="367"/>
        <end position="384"/>
    </location>
</feature>
<feature type="active site" description="Proton donor" evidence="1">
    <location>
        <position position="119"/>
    </location>
</feature>
<feature type="active site" description="Nucleophile" evidence="1">
    <location>
        <position position="266"/>
    </location>
</feature>
<feature type="lipid moiety-binding region" description="GPI-anchor amidated serine" evidence="2">
    <location>
        <position position="401"/>
    </location>
</feature>
<feature type="glycosylation site" description="N-linked (GlcNAc...) asparagine" evidence="2">
    <location>
        <position position="124"/>
    </location>
</feature>
<feature type="glycosylation site" description="N-linked (GlcNAc...) asparagine" evidence="2">
    <location>
        <position position="362"/>
    </location>
</feature>
<feature type="splice variant" id="VSP_020752" description="In isoform 2." evidence="7">
    <original>GKGRFVECVLFFFLLCIIKL</original>
    <variation>VTFSTLHFICCFTLTIFVDI</variation>
    <location>
        <begin position="404"/>
        <end position="423"/>
    </location>
</feature>
<sequence length="425" mass="45358">MASSSLQSLFSLFCLALFSLPLIVSSIGINYGQVANNLPPPKNVIPLLKSVGATKVKLYDADPQALRAFAGSGFELTVALGNEYLAQMSDPIKAQGWVKENVQAYLPNTKIVAIVVGNEVLTSNQSALTAALFPAMQSIHGALVDCGLNKQIFVTTAHSLAILDVSYPPSATSFRRDLLGSLTPILDFHVKTGSPILINAYPFFAYEENPKHVSLDFVLFQPNQGFTDPGSNFHYDNMLFAQVDAVYHALDAVGISYKKVPIVVSETGWPSNGDPQEVGATCDNARKYNGNLIKMMMSKKMRTPIRPECDLTIFVFALFNENMKPGPTSERNYGLFNPDGTPVYSLGIKTSSTHSSGSGSSNSTGGSSSGGGGNTGGSSSGGGIYQPVTGNPSPDYMSISSAGGKGRFVECVLFFFLLCIIKLRL</sequence>
<comment type="function">
    <text evidence="4 5">Plasmodesmal-associated membrane beta-1,3-glucanase involved in plasmodesmal callose degradation and functions in the gating of plasmodesmata.</text>
</comment>
<comment type="catalytic activity">
    <reaction>
        <text>Hydrolysis of (1-&gt;3)-beta-D-glucosidic linkages in (1-&gt;3)-beta-D-glucans.</text>
        <dbReference type="EC" id="3.2.1.39"/>
    </reaction>
</comment>
<comment type="subcellular location">
    <subcellularLocation>
        <location evidence="4">Cell membrane</location>
        <topology evidence="2">Lipid-anchor</topology>
        <topology evidence="2">GPI-anchor</topology>
        <orientation evidence="2">Extracellular side</orientation>
    </subcellularLocation>
    <subcellularLocation>
        <location evidence="4">Cell junction</location>
        <location evidence="4">Plasmodesma</location>
    </subcellularLocation>
</comment>
<comment type="alternative products">
    <event type="alternative splicing"/>
    <isoform>
        <id>Q9FHX5-1</id>
        <name>1</name>
        <sequence type="displayed"/>
    </isoform>
    <isoform>
        <id>Q9FHX5-2</id>
        <name>2</name>
        <sequence type="described" ref="VSP_020752"/>
    </isoform>
</comment>
<comment type="tissue specificity">
    <text evidence="4">Highly expressed in flowers and siliques.</text>
</comment>
<comment type="induction">
    <text evidence="5">By infection with the cucumber mosaic virus (CMV).</text>
</comment>
<comment type="similarity">
    <text evidence="7">Belongs to the glycosyl hydrolase 17 family.</text>
</comment>
<accession>Q9FHX5</accession>
<accession>Q3E8I9</accession>
<gene>
    <name type="ordered locus">At5g42100</name>
    <name type="ORF">MJC20.21</name>
</gene>
<proteinExistence type="evidence at transcript level"/>
<reference key="1">
    <citation type="journal article" date="1999" name="DNA Res.">
        <title>Structural analysis of Arabidopsis thaliana chromosome 5. IX. Sequence features of the regions of 1,011,550 bp covered by seventeen P1 and TAC clones.</title>
        <authorList>
            <person name="Kaneko T."/>
            <person name="Katoh T."/>
            <person name="Sato S."/>
            <person name="Nakamura Y."/>
            <person name="Asamizu E."/>
            <person name="Kotani H."/>
            <person name="Miyajima N."/>
            <person name="Tabata S."/>
        </authorList>
    </citation>
    <scope>NUCLEOTIDE SEQUENCE [LARGE SCALE GENOMIC DNA]</scope>
    <source>
        <strain>cv. Columbia</strain>
    </source>
</reference>
<reference key="2">
    <citation type="journal article" date="2017" name="Plant J.">
        <title>Araport11: a complete reannotation of the Arabidopsis thaliana reference genome.</title>
        <authorList>
            <person name="Cheng C.Y."/>
            <person name="Krishnakumar V."/>
            <person name="Chan A.P."/>
            <person name="Thibaud-Nissen F."/>
            <person name="Schobel S."/>
            <person name="Town C.D."/>
        </authorList>
    </citation>
    <scope>GENOME REANNOTATION</scope>
    <source>
        <strain>cv. Columbia</strain>
    </source>
</reference>
<reference key="3">
    <citation type="journal article" date="2003" name="Science">
        <title>Empirical analysis of transcriptional activity in the Arabidopsis genome.</title>
        <authorList>
            <person name="Yamada K."/>
            <person name="Lim J."/>
            <person name="Dale J.M."/>
            <person name="Chen H."/>
            <person name="Shinn P."/>
            <person name="Palm C.J."/>
            <person name="Southwick A.M."/>
            <person name="Wu H.C."/>
            <person name="Kim C.J."/>
            <person name="Nguyen M."/>
            <person name="Pham P.K."/>
            <person name="Cheuk R.F."/>
            <person name="Karlin-Newmann G."/>
            <person name="Liu S.X."/>
            <person name="Lam B."/>
            <person name="Sakano H."/>
            <person name="Wu T."/>
            <person name="Yu G."/>
            <person name="Miranda M."/>
            <person name="Quach H.L."/>
            <person name="Tripp M."/>
            <person name="Chang C.H."/>
            <person name="Lee J.M."/>
            <person name="Toriumi M.J."/>
            <person name="Chan M.M."/>
            <person name="Tang C.C."/>
            <person name="Onodera C.S."/>
            <person name="Deng J.M."/>
            <person name="Akiyama K."/>
            <person name="Ansari Y."/>
            <person name="Arakawa T."/>
            <person name="Banh J."/>
            <person name="Banno F."/>
            <person name="Bowser L."/>
            <person name="Brooks S.Y."/>
            <person name="Carninci P."/>
            <person name="Chao Q."/>
            <person name="Choy N."/>
            <person name="Enju A."/>
            <person name="Goldsmith A.D."/>
            <person name="Gurjal M."/>
            <person name="Hansen N.F."/>
            <person name="Hayashizaki Y."/>
            <person name="Johnson-Hopson C."/>
            <person name="Hsuan V.W."/>
            <person name="Iida K."/>
            <person name="Karnes M."/>
            <person name="Khan S."/>
            <person name="Koesema E."/>
            <person name="Ishida J."/>
            <person name="Jiang P.X."/>
            <person name="Jones T."/>
            <person name="Kawai J."/>
            <person name="Kamiya A."/>
            <person name="Meyers C."/>
            <person name="Nakajima M."/>
            <person name="Narusaka M."/>
            <person name="Seki M."/>
            <person name="Sakurai T."/>
            <person name="Satou M."/>
            <person name="Tamse R."/>
            <person name="Vaysberg M."/>
            <person name="Wallender E.K."/>
            <person name="Wong C."/>
            <person name="Yamamura Y."/>
            <person name="Yuan S."/>
            <person name="Shinozaki K."/>
            <person name="Davis R.W."/>
            <person name="Theologis A."/>
            <person name="Ecker J.R."/>
        </authorList>
    </citation>
    <scope>NUCLEOTIDE SEQUENCE [LARGE SCALE MRNA] (ISOFORM 1)</scope>
    <source>
        <strain>cv. Columbia</strain>
    </source>
</reference>
<reference key="4">
    <citation type="submission" date="2002-03" db="EMBL/GenBank/DDBJ databases">
        <title>Full-length cDNA from Arabidopsis thaliana.</title>
        <authorList>
            <person name="Brover V.V."/>
            <person name="Troukhan M.E."/>
            <person name="Alexandrov N.A."/>
            <person name="Lu Y.-P."/>
            <person name="Flavell R.B."/>
            <person name="Feldmann K.A."/>
        </authorList>
    </citation>
    <scope>NUCLEOTIDE SEQUENCE [LARGE SCALE MRNA] (ISOFORM 1)</scope>
</reference>
<reference key="5">
    <citation type="journal article" date="2007" name="Plant J.">
        <title>A plasmodesmata-associated beta-1,3-glucanase in Arabidopsis.</title>
        <authorList>
            <person name="Levy A."/>
            <person name="Erlanger M."/>
            <person name="Rosenthal M."/>
            <person name="Epel B.L."/>
        </authorList>
    </citation>
    <scope>FUNCTION</scope>
    <scope>SUBCELLULAR LOCATION</scope>
    <scope>TISSUE SPECIFICITY</scope>
</reference>
<reference key="6">
    <citation type="journal article" date="2013" name="Mol. Plant Microbe Interact.">
        <title>Subcellular dynamics and role of Arabidopsis beta-1,3-glucanases in cell-to-cell movement of tobamoviruses.</title>
        <authorList>
            <person name="Zavaliev R."/>
            <person name="Levy A."/>
            <person name="Gera A."/>
            <person name="Epel B.L."/>
        </authorList>
    </citation>
    <scope>FUNCTION</scope>
    <scope>INDUCTION</scope>
</reference>
<organism>
    <name type="scientific">Arabidopsis thaliana</name>
    <name type="common">Mouse-ear cress</name>
    <dbReference type="NCBI Taxonomy" id="3702"/>
    <lineage>
        <taxon>Eukaryota</taxon>
        <taxon>Viridiplantae</taxon>
        <taxon>Streptophyta</taxon>
        <taxon>Embryophyta</taxon>
        <taxon>Tracheophyta</taxon>
        <taxon>Spermatophyta</taxon>
        <taxon>Magnoliopsida</taxon>
        <taxon>eudicotyledons</taxon>
        <taxon>Gunneridae</taxon>
        <taxon>Pentapetalae</taxon>
        <taxon>rosids</taxon>
        <taxon>malvids</taxon>
        <taxon>Brassicales</taxon>
        <taxon>Brassicaceae</taxon>
        <taxon>Camelineae</taxon>
        <taxon>Arabidopsis</taxon>
    </lineage>
</organism>
<protein>
    <recommendedName>
        <fullName>Glucan endo-1,3-beta-glucosidase 10</fullName>
        <ecNumber>3.2.1.39</ecNumber>
    </recommendedName>
    <alternativeName>
        <fullName>(1-&gt;3)-beta-glucan endohydrolase 10</fullName>
        <shortName>(1-&gt;3)-beta-glucanase 10</shortName>
    </alternativeName>
    <alternativeName>
        <fullName>Beta-1,3-endoglucanase 10</fullName>
        <shortName>Beta-1,3-glucanase 10</shortName>
    </alternativeName>
    <alternativeName>
        <fullName evidence="6">Putative plasmodesmal associated protein</fullName>
        <shortName evidence="6">AtBG_ppap</shortName>
    </alternativeName>
</protein>
<keyword id="KW-0025">Alternative splicing</keyword>
<keyword id="KW-0965">Cell junction</keyword>
<keyword id="KW-1003">Cell membrane</keyword>
<keyword id="KW-0961">Cell wall biogenesis/degradation</keyword>
<keyword id="KW-0325">Glycoprotein</keyword>
<keyword id="KW-0326">Glycosidase</keyword>
<keyword id="KW-0336">GPI-anchor</keyword>
<keyword id="KW-0378">Hydrolase</keyword>
<keyword id="KW-0449">Lipoprotein</keyword>
<keyword id="KW-0472">Membrane</keyword>
<keyword id="KW-0611">Plant defense</keyword>
<keyword id="KW-1185">Reference proteome</keyword>
<keyword id="KW-0732">Signal</keyword>
<dbReference type="EC" id="3.2.1.39"/>
<dbReference type="EMBL" id="AB017067">
    <property type="protein sequence ID" value="BAB08443.1"/>
    <property type="molecule type" value="Genomic_DNA"/>
</dbReference>
<dbReference type="EMBL" id="CP002688">
    <property type="protein sequence ID" value="AED94767.1"/>
    <property type="molecule type" value="Genomic_DNA"/>
</dbReference>
<dbReference type="EMBL" id="BT008863">
    <property type="protein sequence ID" value="AAP68302.1"/>
    <property type="molecule type" value="mRNA"/>
</dbReference>
<dbReference type="EMBL" id="AY054690">
    <property type="protein sequence ID" value="AAK96881.1"/>
    <property type="molecule type" value="mRNA"/>
</dbReference>
<dbReference type="EMBL" id="AY084866">
    <property type="protein sequence ID" value="AAM61429.1"/>
    <property type="molecule type" value="mRNA"/>
</dbReference>
<dbReference type="RefSeq" id="NP_199025.1">
    <molecule id="Q9FHX5-1"/>
    <property type="nucleotide sequence ID" value="NM_123575.4"/>
</dbReference>
<dbReference type="SMR" id="Q9FHX5"/>
<dbReference type="FunCoup" id="Q9FHX5">
    <property type="interactions" value="11"/>
</dbReference>
<dbReference type="STRING" id="3702.Q9FHX5"/>
<dbReference type="CAZy" id="GH17">
    <property type="family name" value="Glycoside Hydrolase Family 17"/>
</dbReference>
<dbReference type="GlyGen" id="Q9FHX5">
    <property type="glycosylation" value="3 sites"/>
</dbReference>
<dbReference type="PaxDb" id="3702-AT5G42100.1"/>
<dbReference type="EnsemblPlants" id="AT5G42100.1">
    <molecule id="Q9FHX5-1"/>
    <property type="protein sequence ID" value="AT5G42100.1"/>
    <property type="gene ID" value="AT5G42100"/>
</dbReference>
<dbReference type="GeneID" id="834215"/>
<dbReference type="Gramene" id="AT5G42100.1">
    <molecule id="Q9FHX5-1"/>
    <property type="protein sequence ID" value="AT5G42100.1"/>
    <property type="gene ID" value="AT5G42100"/>
</dbReference>
<dbReference type="KEGG" id="ath:AT5G42100"/>
<dbReference type="Araport" id="AT5G42100"/>
<dbReference type="TAIR" id="AT5G42100">
    <property type="gene designation" value="BG_PPAP"/>
</dbReference>
<dbReference type="eggNOG" id="ENOG502SHG9">
    <property type="taxonomic scope" value="Eukaryota"/>
</dbReference>
<dbReference type="HOGENOM" id="CLU_024953_1_2_1"/>
<dbReference type="InParanoid" id="Q9FHX5"/>
<dbReference type="OrthoDB" id="77201at2759"/>
<dbReference type="PhylomeDB" id="Q9FHX5"/>
<dbReference type="BioCyc" id="ARA:AT5G42100-MONOMER"/>
<dbReference type="PRO" id="PR:Q9FHX5"/>
<dbReference type="Proteomes" id="UP000006548">
    <property type="component" value="Chromosome 5"/>
</dbReference>
<dbReference type="ExpressionAtlas" id="Q9FHX5">
    <property type="expression patterns" value="baseline and differential"/>
</dbReference>
<dbReference type="GO" id="GO:0005783">
    <property type="term" value="C:endoplasmic reticulum"/>
    <property type="evidence" value="ECO:0000314"/>
    <property type="project" value="TAIR"/>
</dbReference>
<dbReference type="GO" id="GO:0009505">
    <property type="term" value="C:plant-type cell wall"/>
    <property type="evidence" value="ECO:0007005"/>
    <property type="project" value="TAIR"/>
</dbReference>
<dbReference type="GO" id="GO:0005886">
    <property type="term" value="C:plasma membrane"/>
    <property type="evidence" value="ECO:0007669"/>
    <property type="project" value="UniProtKB-SubCell"/>
</dbReference>
<dbReference type="GO" id="GO:0009506">
    <property type="term" value="C:plasmodesma"/>
    <property type="evidence" value="ECO:0000314"/>
    <property type="project" value="TAIR"/>
</dbReference>
<dbReference type="GO" id="GO:0098552">
    <property type="term" value="C:side of membrane"/>
    <property type="evidence" value="ECO:0007669"/>
    <property type="project" value="UniProtKB-KW"/>
</dbReference>
<dbReference type="GO" id="GO:0042973">
    <property type="term" value="F:glucan endo-1,3-beta-D-glucosidase activity"/>
    <property type="evidence" value="ECO:0000315"/>
    <property type="project" value="TAIR"/>
</dbReference>
<dbReference type="GO" id="GO:0005975">
    <property type="term" value="P:carbohydrate metabolic process"/>
    <property type="evidence" value="ECO:0007669"/>
    <property type="project" value="InterPro"/>
</dbReference>
<dbReference type="GO" id="GO:0007154">
    <property type="term" value="P:cell communication"/>
    <property type="evidence" value="ECO:0000315"/>
    <property type="project" value="TAIR"/>
</dbReference>
<dbReference type="GO" id="GO:0071555">
    <property type="term" value="P:cell wall organization"/>
    <property type="evidence" value="ECO:0007669"/>
    <property type="project" value="UniProtKB-KW"/>
</dbReference>
<dbReference type="GO" id="GO:0006952">
    <property type="term" value="P:defense response"/>
    <property type="evidence" value="ECO:0007669"/>
    <property type="project" value="UniProtKB-KW"/>
</dbReference>
<dbReference type="FunFam" id="3.20.20.80:FF:000005">
    <property type="entry name" value="Glucan endo-1,3-beta-glucosidase 14"/>
    <property type="match status" value="1"/>
</dbReference>
<dbReference type="Gene3D" id="3.20.20.80">
    <property type="entry name" value="Glycosidases"/>
    <property type="match status" value="1"/>
</dbReference>
<dbReference type="InterPro" id="IPR000490">
    <property type="entry name" value="Glyco_hydro_17"/>
</dbReference>
<dbReference type="InterPro" id="IPR044965">
    <property type="entry name" value="Glyco_hydro_17_plant"/>
</dbReference>
<dbReference type="InterPro" id="IPR017853">
    <property type="entry name" value="Glycoside_hydrolase_SF"/>
</dbReference>
<dbReference type="PANTHER" id="PTHR32227">
    <property type="entry name" value="GLUCAN ENDO-1,3-BETA-GLUCOSIDASE BG1-RELATED-RELATED"/>
    <property type="match status" value="1"/>
</dbReference>
<dbReference type="Pfam" id="PF00332">
    <property type="entry name" value="Glyco_hydro_17"/>
    <property type="match status" value="1"/>
</dbReference>
<dbReference type="SUPFAM" id="SSF51445">
    <property type="entry name" value="(Trans)glycosidases"/>
    <property type="match status" value="1"/>
</dbReference>
<dbReference type="PROSITE" id="PS00587">
    <property type="entry name" value="GLYCOSYL_HYDROL_F17"/>
    <property type="match status" value="1"/>
</dbReference>
<name>E1310_ARATH</name>